<sequence>LSVNYQWLVR</sequence>
<name>IMP12_NAUMA</name>
<evidence type="ECO:0000269" key="1">
    <source>
    </source>
</evidence>
<evidence type="ECO:0000303" key="2">
    <source>
    </source>
</evidence>
<keyword id="KW-0903">Direct protein sequencing</keyword>
<accession>P85399</accession>
<proteinExistence type="evidence at protein level"/>
<feature type="chain" id="PRO_0000371473" description="Uncharacterized protein IMPP12">
    <location>
        <begin position="1" status="less than"/>
        <end position="10" status="greater than"/>
    </location>
</feature>
<feature type="unsure residue" description="L or I" evidence="1">
    <location>
        <position position="1"/>
    </location>
</feature>
<feature type="unsure residue" description="L or I" evidence="1">
    <location>
        <position position="8"/>
    </location>
</feature>
<feature type="non-terminal residue" evidence="2">
    <location>
        <position position="1"/>
    </location>
</feature>
<feature type="non-terminal residue" evidence="2">
    <location>
        <position position="10"/>
    </location>
</feature>
<organism>
    <name type="scientific">Nautilus macromphalus</name>
    <name type="common">Bellybutton nautilus</name>
    <dbReference type="NCBI Taxonomy" id="34576"/>
    <lineage>
        <taxon>Eukaryota</taxon>
        <taxon>Metazoa</taxon>
        <taxon>Spiralia</taxon>
        <taxon>Lophotrochozoa</taxon>
        <taxon>Mollusca</taxon>
        <taxon>Cephalopoda</taxon>
        <taxon>Nautiloidea</taxon>
        <taxon>Nautilida</taxon>
        <taxon>Nautilidae</taxon>
        <taxon>Nautilus</taxon>
    </lineage>
</organism>
<comment type="tissue specificity">
    <text evidence="1">Nacreous layer of shell.</text>
</comment>
<reference key="1">
    <citation type="journal article" date="2009" name="ChemBioChem">
        <title>Evolution of nacre: biochemistry and 'shellomics' of the shell organic matrix of the cephalopod Nautilus macromphalus.</title>
        <authorList>
            <person name="Marie B."/>
            <person name="Marin F."/>
            <person name="Marie A."/>
            <person name="Bedouet L."/>
            <person name="Dubost L."/>
            <person name="Alcaraz G."/>
            <person name="Milet C."/>
            <person name="Luquet G."/>
        </authorList>
    </citation>
    <scope>PROTEIN SEQUENCE</scope>
    <scope>TISSUE SPECIFICITY</scope>
    <source>
        <tissue>Shell</tissue>
    </source>
</reference>
<protein>
    <recommendedName>
        <fullName evidence="2">Uncharacterized protein IMPP12</fullName>
    </recommendedName>
</protein>